<gene>
    <name type="primary">actg1</name>
    <name type="synonym">actg</name>
</gene>
<protein>
    <recommendedName>
        <fullName>Actin, cytoplasmic 2</fullName>
        <ecNumber evidence="3">3.6.4.-</ecNumber>
    </recommendedName>
    <alternativeName>
        <fullName>Gamma-actin</fullName>
    </alternativeName>
    <component>
        <recommendedName>
            <fullName>Actin, cytoplasmic 2, N-terminally processed</fullName>
        </recommendedName>
    </component>
</protein>
<keyword id="KW-0007">Acetylation</keyword>
<keyword id="KW-0067">ATP-binding</keyword>
<keyword id="KW-0963">Cytoplasm</keyword>
<keyword id="KW-0206">Cytoskeleton</keyword>
<keyword id="KW-0378">Hydrolase</keyword>
<keyword id="KW-0488">Methylation</keyword>
<keyword id="KW-0547">Nucleotide-binding</keyword>
<keyword id="KW-0558">Oxidation</keyword>
<organism>
    <name type="scientific">Triakis scyllium</name>
    <name type="common">Banded houndshark</name>
    <name type="synonym">Hemigaleus pingi</name>
    <dbReference type="NCBI Taxonomy" id="30494"/>
    <lineage>
        <taxon>Eukaryota</taxon>
        <taxon>Metazoa</taxon>
        <taxon>Chordata</taxon>
        <taxon>Craniata</taxon>
        <taxon>Vertebrata</taxon>
        <taxon>Chondrichthyes</taxon>
        <taxon>Elasmobranchii</taxon>
        <taxon>Galeomorphii</taxon>
        <taxon>Galeoidea</taxon>
        <taxon>Carcharhiniformes</taxon>
        <taxon>Triakidae</taxon>
        <taxon>Triakis</taxon>
    </lineage>
</organism>
<reference key="1">
    <citation type="submission" date="2002-05" db="EMBL/GenBank/DDBJ databases">
        <title>Molecular cloning and sequencing of Triakis scyllium beta actin.</title>
        <authorList>
            <person name="Haruta C."/>
            <person name="Inoue Y."/>
            <person name="Moritomo T."/>
            <person name="Nakanishi T."/>
        </authorList>
    </citation>
    <scope>NUCLEOTIDE SEQUENCE [MRNA]</scope>
</reference>
<dbReference type="EC" id="3.6.4.-" evidence="3"/>
<dbReference type="EMBL" id="AB084472">
    <property type="protein sequence ID" value="BAB91355.1"/>
    <property type="molecule type" value="mRNA"/>
</dbReference>
<dbReference type="SMR" id="Q8JJB8"/>
<dbReference type="GO" id="GO:0005856">
    <property type="term" value="C:cytoskeleton"/>
    <property type="evidence" value="ECO:0000250"/>
    <property type="project" value="AgBase"/>
</dbReference>
<dbReference type="GO" id="GO:0097433">
    <property type="term" value="C:dense body"/>
    <property type="evidence" value="ECO:0000250"/>
    <property type="project" value="AgBase"/>
</dbReference>
<dbReference type="GO" id="GO:0005925">
    <property type="term" value="C:focal adhesion"/>
    <property type="evidence" value="ECO:0000250"/>
    <property type="project" value="AgBase"/>
</dbReference>
<dbReference type="GO" id="GO:0005886">
    <property type="term" value="C:plasma membrane"/>
    <property type="evidence" value="ECO:0000250"/>
    <property type="project" value="AgBase"/>
</dbReference>
<dbReference type="GO" id="GO:0005524">
    <property type="term" value="F:ATP binding"/>
    <property type="evidence" value="ECO:0007669"/>
    <property type="project" value="UniProtKB-KW"/>
</dbReference>
<dbReference type="GO" id="GO:0016787">
    <property type="term" value="F:hydrolase activity"/>
    <property type="evidence" value="ECO:0007669"/>
    <property type="project" value="UniProtKB-KW"/>
</dbReference>
<dbReference type="CDD" id="cd10224">
    <property type="entry name" value="ASKHA_NBD_actin"/>
    <property type="match status" value="1"/>
</dbReference>
<dbReference type="FunFam" id="3.30.420.40:FF:000131">
    <property type="entry name" value="Actin, alpha skeletal muscle"/>
    <property type="match status" value="1"/>
</dbReference>
<dbReference type="FunFam" id="3.30.420.40:FF:000291">
    <property type="entry name" value="Actin, alpha skeletal muscle"/>
    <property type="match status" value="1"/>
</dbReference>
<dbReference type="FunFam" id="3.90.640.10:FF:000047">
    <property type="entry name" value="Actin, alpha skeletal muscle"/>
    <property type="match status" value="1"/>
</dbReference>
<dbReference type="FunFam" id="3.30.420.40:FF:000058">
    <property type="entry name" value="Putative actin-related protein 5"/>
    <property type="match status" value="1"/>
</dbReference>
<dbReference type="Gene3D" id="3.30.420.40">
    <property type="match status" value="2"/>
</dbReference>
<dbReference type="Gene3D" id="3.90.640.10">
    <property type="entry name" value="Actin, Chain A, domain 4"/>
    <property type="match status" value="1"/>
</dbReference>
<dbReference type="InterPro" id="IPR004000">
    <property type="entry name" value="Actin"/>
</dbReference>
<dbReference type="InterPro" id="IPR020902">
    <property type="entry name" value="Actin/actin-like_CS"/>
</dbReference>
<dbReference type="InterPro" id="IPR004001">
    <property type="entry name" value="Actin_CS"/>
</dbReference>
<dbReference type="InterPro" id="IPR043129">
    <property type="entry name" value="ATPase_NBD"/>
</dbReference>
<dbReference type="PANTHER" id="PTHR11937">
    <property type="entry name" value="ACTIN"/>
    <property type="match status" value="1"/>
</dbReference>
<dbReference type="Pfam" id="PF00022">
    <property type="entry name" value="Actin"/>
    <property type="match status" value="1"/>
</dbReference>
<dbReference type="PRINTS" id="PR00190">
    <property type="entry name" value="ACTIN"/>
</dbReference>
<dbReference type="SMART" id="SM00268">
    <property type="entry name" value="ACTIN"/>
    <property type="match status" value="1"/>
</dbReference>
<dbReference type="SUPFAM" id="SSF53067">
    <property type="entry name" value="Actin-like ATPase domain"/>
    <property type="match status" value="2"/>
</dbReference>
<dbReference type="PROSITE" id="PS00406">
    <property type="entry name" value="ACTINS_1"/>
    <property type="match status" value="1"/>
</dbReference>
<dbReference type="PROSITE" id="PS00432">
    <property type="entry name" value="ACTINS_2"/>
    <property type="match status" value="1"/>
</dbReference>
<dbReference type="PROSITE" id="PS01132">
    <property type="entry name" value="ACTINS_ACT_LIKE"/>
    <property type="match status" value="1"/>
</dbReference>
<evidence type="ECO:0000250" key="1">
    <source>
        <dbReference type="UniProtKB" id="P63260"/>
    </source>
</evidence>
<evidence type="ECO:0000250" key="2">
    <source>
        <dbReference type="UniProtKB" id="P63261"/>
    </source>
</evidence>
<evidence type="ECO:0000250" key="3">
    <source>
        <dbReference type="UniProtKB" id="P68137"/>
    </source>
</evidence>
<evidence type="ECO:0000305" key="4"/>
<sequence length="375" mass="41751">MDDEIAALVVDNGSGMCKAGFAGDDAPRAVFPSIVGRPRHQGVMVGMGQKDSYVGDEAQSKRGILTLKYPIEHGIVTNWDDMEKIWHHTFYNELRVAPEEHPVLLTEAPLNPKANREKMTQIMFETFNTPAMYVAIQAVLSLYASGRTTGIVMDSGDGVTHTVPIYEGYALPHAILRLDLAGRDLTDYLMKILTERGYSFTTTAEREIVRDIKEKLCYVALDFEQEMATAASSSSLEKSYELPDGQVITIGNERFRCPEALFQPSFLGMESCGIHETTFNSIMKCDVDIRKDLYANTVLSGGTTMYPGIADRMQKEITALAPSTMKIKIIAPPERKYSVWIGGSILASLSTFQQMWISKQEYDESGPSIVHRKCF</sequence>
<comment type="function">
    <text evidence="2">Actins are highly conserved proteins that are involved in various types of cell motility and are ubiquitously expressed in all eukaryotic cells.</text>
</comment>
<comment type="catalytic activity">
    <reaction evidence="3">
        <text>ATP + H2O = ADP + phosphate + H(+)</text>
        <dbReference type="Rhea" id="RHEA:13065"/>
        <dbReference type="ChEBI" id="CHEBI:15377"/>
        <dbReference type="ChEBI" id="CHEBI:15378"/>
        <dbReference type="ChEBI" id="CHEBI:30616"/>
        <dbReference type="ChEBI" id="CHEBI:43474"/>
        <dbReference type="ChEBI" id="CHEBI:456216"/>
    </reaction>
</comment>
<comment type="subunit">
    <text>Polymerization of globular actin (G-actin) leads to a structural filament (F-actin) in the form of a two-stranded helix. Each actin can bind to 4 others.</text>
</comment>
<comment type="subcellular location">
    <subcellularLocation>
        <location evidence="2">Cytoplasm</location>
        <location evidence="2">Cytoskeleton</location>
    </subcellularLocation>
</comment>
<comment type="PTM">
    <molecule>Actin, cytoplasmic 2</molecule>
    <text evidence="2">N-terminal cleavage of acetylated methionine of immature cytoplasmic actin by ACTMAP.</text>
</comment>
<comment type="PTM">
    <text evidence="1">Oxidation of Met-44 and Met-47 by MICALs (mical1, mical2 or mical3) to form methionine sulfoxide promotes actin filament depolymerization. Mical1 and mical2 produce the (R)-S-oxide form. The (R)-S-oxide form is reverted by msrb1 and msrb2, which promote actin repolymerization.</text>
</comment>
<comment type="PTM">
    <text evidence="2">Methylated at His-73 by SETD3.</text>
</comment>
<comment type="miscellaneous">
    <text>In vertebrates 3 main groups of actin isoforms, alpha, beta and gamma have been identified. The alpha actins are found in muscle tissues and are a major constituent of the contractile apparatus. The beta and gamma actins coexist in most cell types as components of the cytoskeleton and as mediators of internal cell motility.</text>
</comment>
<comment type="similarity">
    <text evidence="4">Belongs to the actin family.</text>
</comment>
<name>ACTG_TRISC</name>
<feature type="chain" id="PRO_0000367107" description="Actin, cytoplasmic 2">
    <location>
        <begin position="1"/>
        <end position="375"/>
    </location>
</feature>
<feature type="initiator methionine" description="Removed; alternate" evidence="2">
    <location>
        <position position="1"/>
    </location>
</feature>
<feature type="chain" id="PRO_0000280379" description="Actin, cytoplasmic 2, N-terminally processed">
    <location>
        <begin position="2"/>
        <end position="375"/>
    </location>
</feature>
<feature type="modified residue" description="N-acetylmethionine; in Actin, cytoplasmic 2; alternate" evidence="2">
    <location>
        <position position="1"/>
    </location>
</feature>
<feature type="modified residue" description="N-acetylaspartate; in Actin, cytoplasmic 2, N-terminally processed" evidence="2">
    <location>
        <position position="2"/>
    </location>
</feature>
<feature type="modified residue" description="Methionine (R)-sulfoxide" evidence="1">
    <location>
        <position position="44"/>
    </location>
</feature>
<feature type="modified residue" description="Methionine (R)-sulfoxide" evidence="1">
    <location>
        <position position="47"/>
    </location>
</feature>
<feature type="modified residue" description="Tele-methylhistidine" evidence="1">
    <location>
        <position position="73"/>
    </location>
</feature>
<accession>Q8JJB8</accession>
<proteinExistence type="evidence at transcript level"/>